<evidence type="ECO:0000255" key="1">
    <source>
        <dbReference type="HAMAP-Rule" id="MF_01304"/>
    </source>
</evidence>
<evidence type="ECO:0000269" key="2">
    <source>
    </source>
</evidence>
<evidence type="ECO:0000305" key="3"/>
<evidence type="ECO:0000305" key="4">
    <source>
    </source>
</evidence>
<gene>
    <name type="primary">ybhG</name>
    <name type="ordered locus">b0795</name>
    <name type="ordered locus">JW0779</name>
</gene>
<keyword id="KW-0175">Coiled coil</keyword>
<keyword id="KW-0574">Periplasm</keyword>
<keyword id="KW-1185">Reference proteome</keyword>
<keyword id="KW-0732">Signal</keyword>
<proteinExistence type="evidence at transcript level"/>
<sequence length="332" mass="36416">MMKKPVVIGLAVVVLAAVVAGGYWWYQSRQDNGLTLYGNVDIRTVNLSFRVGGRVESLAVDEGDAIKAGQVLGELDHKPYEIALMQAKAGVSVAQAQYDLMLAGYRNEEIAQAAAAVKQAQAAYDYAQNFYNRQQGLWKSRTISANDLENARSSRDQAQATLKSAQDKLRQYRSGNREQDIAQAKASLEQAQAQLAQAELNLQDSTLIAPSDGTLLTRAVEPGTVLNEGGTVFTVSLTRPVWVRAYVDERNLDQAQPGRKVLLYTDGRPDKPYHGQIGFVSPTAEFTPKTVETPDLRTDLVYRLRIVVTDADDALRQGMPVTVQFGDEAGHE</sequence>
<name>YBHG_ECOLI</name>
<protein>
    <recommendedName>
        <fullName evidence="1 3">UPF0194 membrane protein YbhG</fullName>
    </recommendedName>
</protein>
<reference key="1">
    <citation type="journal article" date="1996" name="DNA Res.">
        <title>A 718-kb DNA sequence of the Escherichia coli K-12 genome corresponding to the 12.7-28.0 min region on the linkage map.</title>
        <authorList>
            <person name="Oshima T."/>
            <person name="Aiba H."/>
            <person name="Baba T."/>
            <person name="Fujita K."/>
            <person name="Hayashi K."/>
            <person name="Honjo A."/>
            <person name="Ikemoto K."/>
            <person name="Inada T."/>
            <person name="Itoh T."/>
            <person name="Kajihara M."/>
            <person name="Kanai K."/>
            <person name="Kashimoto K."/>
            <person name="Kimura S."/>
            <person name="Kitagawa M."/>
            <person name="Makino K."/>
            <person name="Masuda S."/>
            <person name="Miki T."/>
            <person name="Mizobuchi K."/>
            <person name="Mori H."/>
            <person name="Motomura K."/>
            <person name="Nakamura Y."/>
            <person name="Nashimoto H."/>
            <person name="Nishio Y."/>
            <person name="Saito N."/>
            <person name="Sampei G."/>
            <person name="Seki Y."/>
            <person name="Tagami H."/>
            <person name="Takemoto K."/>
            <person name="Wada C."/>
            <person name="Yamamoto Y."/>
            <person name="Yano M."/>
            <person name="Horiuchi T."/>
        </authorList>
    </citation>
    <scope>NUCLEOTIDE SEQUENCE [LARGE SCALE GENOMIC DNA]</scope>
    <source>
        <strain>K12 / W3110 / ATCC 27325 / DSM 5911</strain>
    </source>
</reference>
<reference key="2">
    <citation type="journal article" date="1997" name="Science">
        <title>The complete genome sequence of Escherichia coli K-12.</title>
        <authorList>
            <person name="Blattner F.R."/>
            <person name="Plunkett G. III"/>
            <person name="Bloch C.A."/>
            <person name="Perna N.T."/>
            <person name="Burland V."/>
            <person name="Riley M."/>
            <person name="Collado-Vides J."/>
            <person name="Glasner J.D."/>
            <person name="Rode C.K."/>
            <person name="Mayhew G.F."/>
            <person name="Gregor J."/>
            <person name="Davis N.W."/>
            <person name="Kirkpatrick H.A."/>
            <person name="Goeden M.A."/>
            <person name="Rose D.J."/>
            <person name="Mau B."/>
            <person name="Shao Y."/>
        </authorList>
    </citation>
    <scope>NUCLEOTIDE SEQUENCE [LARGE SCALE GENOMIC DNA]</scope>
    <source>
        <strain>K12 / MG1655 / ATCC 47076</strain>
    </source>
</reference>
<reference key="3">
    <citation type="journal article" date="2006" name="Mol. Syst. Biol.">
        <title>Highly accurate genome sequences of Escherichia coli K-12 strains MG1655 and W3110.</title>
        <authorList>
            <person name="Hayashi K."/>
            <person name="Morooka N."/>
            <person name="Yamamoto Y."/>
            <person name="Fujita K."/>
            <person name="Isono K."/>
            <person name="Choi S."/>
            <person name="Ohtsubo E."/>
            <person name="Baba T."/>
            <person name="Wanner B.L."/>
            <person name="Mori H."/>
            <person name="Horiuchi T."/>
        </authorList>
    </citation>
    <scope>NUCLEOTIDE SEQUENCE [LARGE SCALE GENOMIC DNA]</scope>
    <source>
        <strain>K12 / W3110 / ATCC 27325 / DSM 5911</strain>
    </source>
</reference>
<reference key="4">
    <citation type="journal article" date="2016" name="Microbiology">
        <title>Transcription factor CecR (YbiH) regulates a set of genes affecting the sensitivity of Escherichia coli against cefoperazone and chloramphenicol.</title>
        <authorList>
            <person name="Yamanaka Y."/>
            <person name="Shimada T."/>
            <person name="Yamamoto K."/>
            <person name="Ishihama A."/>
        </authorList>
    </citation>
    <scope>FUNCTION</scope>
    <scope>INDUCTION</scope>
    <scope>DISRUPTION PHENOTYPE</scope>
    <source>
        <strain>K12 / W3110 / ATCC 27325 / DSM 5911</strain>
    </source>
</reference>
<dbReference type="EMBL" id="U00096">
    <property type="protein sequence ID" value="AAC73882.1"/>
    <property type="molecule type" value="Genomic_DNA"/>
</dbReference>
<dbReference type="EMBL" id="AP009048">
    <property type="protein sequence ID" value="BAA35455.1"/>
    <property type="molecule type" value="Genomic_DNA"/>
</dbReference>
<dbReference type="PIR" id="C64816">
    <property type="entry name" value="C64816"/>
</dbReference>
<dbReference type="RefSeq" id="NP_415316.1">
    <property type="nucleotide sequence ID" value="NC_000913.3"/>
</dbReference>
<dbReference type="SMR" id="P75777"/>
<dbReference type="BioGRID" id="4259960">
    <property type="interactions" value="169"/>
</dbReference>
<dbReference type="BioGRID" id="849788">
    <property type="interactions" value="1"/>
</dbReference>
<dbReference type="FunCoup" id="P75777">
    <property type="interactions" value="83"/>
</dbReference>
<dbReference type="IntAct" id="P75777">
    <property type="interactions" value="1"/>
</dbReference>
<dbReference type="STRING" id="511145.b0795"/>
<dbReference type="TCDB" id="3.A.1.105.15">
    <property type="family name" value="the atp-binding cassette (abc) superfamily"/>
</dbReference>
<dbReference type="jPOST" id="P75777"/>
<dbReference type="PaxDb" id="511145-b0795"/>
<dbReference type="EnsemblBacteria" id="AAC73882">
    <property type="protein sequence ID" value="AAC73882"/>
    <property type="gene ID" value="b0795"/>
</dbReference>
<dbReference type="GeneID" id="945414"/>
<dbReference type="KEGG" id="ecj:JW0779"/>
<dbReference type="KEGG" id="eco:b0795"/>
<dbReference type="PATRIC" id="fig|511145.12.peg.821"/>
<dbReference type="EchoBASE" id="EB3099"/>
<dbReference type="eggNOG" id="COG0845">
    <property type="taxonomic scope" value="Bacteria"/>
</dbReference>
<dbReference type="HOGENOM" id="CLU_018816_6_3_6"/>
<dbReference type="InParanoid" id="P75777"/>
<dbReference type="OMA" id="VWIRAYI"/>
<dbReference type="PhylomeDB" id="P75777"/>
<dbReference type="BioCyc" id="EcoCyc:G6412-MONOMER"/>
<dbReference type="PRO" id="PR:P75777"/>
<dbReference type="Proteomes" id="UP000000625">
    <property type="component" value="Chromosome"/>
</dbReference>
<dbReference type="GO" id="GO:0042597">
    <property type="term" value="C:periplasmic space"/>
    <property type="evidence" value="ECO:0007669"/>
    <property type="project" value="UniProtKB-SubCell"/>
</dbReference>
<dbReference type="GO" id="GO:0005886">
    <property type="term" value="C:plasma membrane"/>
    <property type="evidence" value="ECO:0000314"/>
    <property type="project" value="EcoCyc"/>
</dbReference>
<dbReference type="GO" id="GO:0046677">
    <property type="term" value="P:response to antibiotic"/>
    <property type="evidence" value="ECO:0000314"/>
    <property type="project" value="EcoCyc"/>
</dbReference>
<dbReference type="FunFam" id="1.10.287.470:FF:000004">
    <property type="entry name" value="UPF0194 membrane protein YbhG"/>
    <property type="match status" value="1"/>
</dbReference>
<dbReference type="FunFam" id="2.40.30.170:FF:000005">
    <property type="entry name" value="UPF0194 membrane protein YbhG"/>
    <property type="match status" value="1"/>
</dbReference>
<dbReference type="FunFam" id="2.40.50.100:FF:000025">
    <property type="entry name" value="UPF0194 membrane protein YbhG"/>
    <property type="match status" value="1"/>
</dbReference>
<dbReference type="Gene3D" id="2.40.30.170">
    <property type="match status" value="1"/>
</dbReference>
<dbReference type="Gene3D" id="2.40.50.100">
    <property type="match status" value="2"/>
</dbReference>
<dbReference type="Gene3D" id="1.10.287.470">
    <property type="entry name" value="Helix hairpin bin"/>
    <property type="match status" value="1"/>
</dbReference>
<dbReference type="HAMAP" id="MF_01304">
    <property type="entry name" value="UPF0194"/>
    <property type="match status" value="1"/>
</dbReference>
<dbReference type="InterPro" id="IPR032317">
    <property type="entry name" value="CusB_D23"/>
</dbReference>
<dbReference type="InterPro" id="IPR022936">
    <property type="entry name" value="UPF0194_membrane_YbhG"/>
</dbReference>
<dbReference type="InterPro" id="IPR050465">
    <property type="entry name" value="UPF0194_transport"/>
</dbReference>
<dbReference type="NCBIfam" id="NF002939">
    <property type="entry name" value="PRK03598.1"/>
    <property type="match status" value="1"/>
</dbReference>
<dbReference type="PANTHER" id="PTHR32347">
    <property type="entry name" value="EFFLUX SYSTEM COMPONENT YKNX-RELATED"/>
    <property type="match status" value="1"/>
</dbReference>
<dbReference type="PANTHER" id="PTHR32347:SF29">
    <property type="entry name" value="UPF0194 MEMBRANE PROTEIN YBHG"/>
    <property type="match status" value="1"/>
</dbReference>
<dbReference type="Pfam" id="PF16576">
    <property type="entry name" value="HlyD_D23"/>
    <property type="match status" value="1"/>
</dbReference>
<dbReference type="SUPFAM" id="SSF111369">
    <property type="entry name" value="HlyD-like secretion proteins"/>
    <property type="match status" value="2"/>
</dbReference>
<dbReference type="SUPFAM" id="SSF56954">
    <property type="entry name" value="Outer membrane efflux proteins (OEP)"/>
    <property type="match status" value="1"/>
</dbReference>
<comment type="function">
    <text evidence="4">Could be involved in the sensitivity control to chloramphenicol.</text>
</comment>
<comment type="subcellular location">
    <subcellularLocation>
        <location evidence="1 3">Periplasm</location>
    </subcellularLocation>
</comment>
<comment type="induction">
    <text evidence="2">Repressed by the transcriptional regulator CecR.</text>
</comment>
<comment type="disruption phenotype">
    <text evidence="2">Mutant shows increased sensitivity to chloramphenicol.</text>
</comment>
<comment type="similarity">
    <text evidence="1 3">Belongs to the UPF0194 family.</text>
</comment>
<organism>
    <name type="scientific">Escherichia coli (strain K12)</name>
    <dbReference type="NCBI Taxonomy" id="83333"/>
    <lineage>
        <taxon>Bacteria</taxon>
        <taxon>Pseudomonadati</taxon>
        <taxon>Pseudomonadota</taxon>
        <taxon>Gammaproteobacteria</taxon>
        <taxon>Enterobacterales</taxon>
        <taxon>Enterobacteriaceae</taxon>
        <taxon>Escherichia</taxon>
    </lineage>
</organism>
<accession>P75777</accession>
<feature type="signal peptide" evidence="1">
    <location>
        <begin position="1"/>
        <end position="20"/>
    </location>
</feature>
<feature type="chain" id="PRO_0000088746" description="UPF0194 membrane protein YbhG">
    <location>
        <begin position="21"/>
        <end position="332"/>
    </location>
</feature>
<feature type="coiled-coil region" evidence="1">
    <location>
        <begin position="145"/>
        <end position="207"/>
    </location>
</feature>